<evidence type="ECO:0000255" key="1">
    <source>
        <dbReference type="HAMAP-Rule" id="MF_00127"/>
    </source>
</evidence>
<evidence type="ECO:0000305" key="2"/>
<reference key="1">
    <citation type="journal article" date="2003" name="J. Bacteriol.">
        <title>Complete genome sequence of the ammonia-oxidizing bacterium and obligate chemolithoautotroph Nitrosomonas europaea.</title>
        <authorList>
            <person name="Chain P."/>
            <person name="Lamerdin J.E."/>
            <person name="Larimer F.W."/>
            <person name="Regala W."/>
            <person name="Lao V."/>
            <person name="Land M.L."/>
            <person name="Hauser L."/>
            <person name="Hooper A.B."/>
            <person name="Klotz M.G."/>
            <person name="Norton J."/>
            <person name="Sayavedra-Soto L.A."/>
            <person name="Arciero D.M."/>
            <person name="Hommes N.G."/>
            <person name="Whittaker M.M."/>
            <person name="Arp D.J."/>
        </authorList>
    </citation>
    <scope>NUCLEOTIDE SEQUENCE [LARGE SCALE GENOMIC DNA]</scope>
    <source>
        <strain>ATCC 19718 / CIP 103999 / KCTC 2705 / NBRC 14298</strain>
    </source>
</reference>
<comment type="catalytic activity">
    <reaction evidence="1">
        <text>tRNA(His) + L-histidine + ATP = L-histidyl-tRNA(His) + AMP + diphosphate + H(+)</text>
        <dbReference type="Rhea" id="RHEA:17313"/>
        <dbReference type="Rhea" id="RHEA-COMP:9665"/>
        <dbReference type="Rhea" id="RHEA-COMP:9689"/>
        <dbReference type="ChEBI" id="CHEBI:15378"/>
        <dbReference type="ChEBI" id="CHEBI:30616"/>
        <dbReference type="ChEBI" id="CHEBI:33019"/>
        <dbReference type="ChEBI" id="CHEBI:57595"/>
        <dbReference type="ChEBI" id="CHEBI:78442"/>
        <dbReference type="ChEBI" id="CHEBI:78527"/>
        <dbReference type="ChEBI" id="CHEBI:456215"/>
        <dbReference type="EC" id="6.1.1.21"/>
    </reaction>
</comment>
<comment type="subunit">
    <text evidence="1">Homodimer.</text>
</comment>
<comment type="subcellular location">
    <subcellularLocation>
        <location evidence="1">Cytoplasm</location>
    </subcellularLocation>
</comment>
<comment type="similarity">
    <text evidence="1">Belongs to the class-II aminoacyl-tRNA synthetase family.</text>
</comment>
<comment type="sequence caution" evidence="2">
    <conflict type="erroneous initiation">
        <sequence resource="EMBL-CDS" id="CAD84061"/>
    </conflict>
</comment>
<keyword id="KW-0030">Aminoacyl-tRNA synthetase</keyword>
<keyword id="KW-0067">ATP-binding</keyword>
<keyword id="KW-0963">Cytoplasm</keyword>
<keyword id="KW-0436">Ligase</keyword>
<keyword id="KW-0547">Nucleotide-binding</keyword>
<keyword id="KW-0648">Protein biosynthesis</keyword>
<keyword id="KW-1185">Reference proteome</keyword>
<feature type="chain" id="PRO_0000136211" description="Histidine--tRNA ligase">
    <location>
        <begin position="1"/>
        <end position="420"/>
    </location>
</feature>
<sequence length="420" mass="46638">MPEPIRAVRGMNDILPDESGLWAFFEDTIRTWLAAYGYRNLRTPIVEQTDLFVRSIGEVTDIVEKEMYTFVDHLNGENLTLRPEGTASCVRAVIEHNLLYAGPQRLYYSGPMFRHERPQKGRYRQFHQVGVEALGFAGPDIDAELIVMCARLWRLLGISDVRLEISTLGSTESRSVYRARLISYLEKFCDDLDEDARRRLKTNPLRILDSKNPAMREILAGAPRLFDDLDEDSLAHFEALQRILRNQDISFEINNRLVRGLDYYNRTVFEWVTDKLGAQGTICAGGRYDGLIAQIGGKPAPACGFAMGIERILALMGENGAVGAHAIPDIYVVHQGEAAAEFSWKVAESLRDDGLKVVLHSGGGNFKAQMKKADASGARFAAIIGEDEVVAGQISIKPLREAAEQIRVDLAGAAALLGNI</sequence>
<proteinExistence type="inferred from homology"/>
<organism>
    <name type="scientific">Nitrosomonas europaea (strain ATCC 19718 / CIP 103999 / KCTC 2705 / NBRC 14298)</name>
    <dbReference type="NCBI Taxonomy" id="228410"/>
    <lineage>
        <taxon>Bacteria</taxon>
        <taxon>Pseudomonadati</taxon>
        <taxon>Pseudomonadota</taxon>
        <taxon>Betaproteobacteria</taxon>
        <taxon>Nitrosomonadales</taxon>
        <taxon>Nitrosomonadaceae</taxon>
        <taxon>Nitrosomonas</taxon>
    </lineage>
</organism>
<protein>
    <recommendedName>
        <fullName evidence="1">Histidine--tRNA ligase</fullName>
        <ecNumber evidence="1">6.1.1.21</ecNumber>
    </recommendedName>
    <alternativeName>
        <fullName evidence="1">Histidyl-tRNA synthetase</fullName>
        <shortName evidence="1">HisRS</shortName>
    </alternativeName>
</protein>
<dbReference type="EC" id="6.1.1.21" evidence="1"/>
<dbReference type="EMBL" id="AL954747">
    <property type="protein sequence ID" value="CAD84061.1"/>
    <property type="status" value="ALT_INIT"/>
    <property type="molecule type" value="Genomic_DNA"/>
</dbReference>
<dbReference type="RefSeq" id="WP_011110797.1">
    <property type="nucleotide sequence ID" value="NC_004757.1"/>
</dbReference>
<dbReference type="SMR" id="Q82XU9"/>
<dbReference type="STRING" id="228410.NE0150"/>
<dbReference type="GeneID" id="87103360"/>
<dbReference type="KEGG" id="neu:NE0150"/>
<dbReference type="eggNOG" id="COG0124">
    <property type="taxonomic scope" value="Bacteria"/>
</dbReference>
<dbReference type="HOGENOM" id="CLU_025113_1_1_4"/>
<dbReference type="OrthoDB" id="9800814at2"/>
<dbReference type="PhylomeDB" id="Q82XU9"/>
<dbReference type="Proteomes" id="UP000001416">
    <property type="component" value="Chromosome"/>
</dbReference>
<dbReference type="GO" id="GO:0005737">
    <property type="term" value="C:cytoplasm"/>
    <property type="evidence" value="ECO:0007669"/>
    <property type="project" value="UniProtKB-SubCell"/>
</dbReference>
<dbReference type="GO" id="GO:0005524">
    <property type="term" value="F:ATP binding"/>
    <property type="evidence" value="ECO:0007669"/>
    <property type="project" value="UniProtKB-UniRule"/>
</dbReference>
<dbReference type="GO" id="GO:0004821">
    <property type="term" value="F:histidine-tRNA ligase activity"/>
    <property type="evidence" value="ECO:0007669"/>
    <property type="project" value="UniProtKB-UniRule"/>
</dbReference>
<dbReference type="GO" id="GO:0006427">
    <property type="term" value="P:histidyl-tRNA aminoacylation"/>
    <property type="evidence" value="ECO:0007669"/>
    <property type="project" value="UniProtKB-UniRule"/>
</dbReference>
<dbReference type="CDD" id="cd00773">
    <property type="entry name" value="HisRS-like_core"/>
    <property type="match status" value="1"/>
</dbReference>
<dbReference type="CDD" id="cd00859">
    <property type="entry name" value="HisRS_anticodon"/>
    <property type="match status" value="1"/>
</dbReference>
<dbReference type="FunFam" id="3.30.930.10:FF:000005">
    <property type="entry name" value="Histidine--tRNA ligase"/>
    <property type="match status" value="1"/>
</dbReference>
<dbReference type="Gene3D" id="3.40.50.800">
    <property type="entry name" value="Anticodon-binding domain"/>
    <property type="match status" value="1"/>
</dbReference>
<dbReference type="Gene3D" id="3.30.930.10">
    <property type="entry name" value="Bira Bifunctional Protein, Domain 2"/>
    <property type="match status" value="1"/>
</dbReference>
<dbReference type="HAMAP" id="MF_00127">
    <property type="entry name" value="His_tRNA_synth"/>
    <property type="match status" value="1"/>
</dbReference>
<dbReference type="InterPro" id="IPR006195">
    <property type="entry name" value="aa-tRNA-synth_II"/>
</dbReference>
<dbReference type="InterPro" id="IPR045864">
    <property type="entry name" value="aa-tRNA-synth_II/BPL/LPL"/>
</dbReference>
<dbReference type="InterPro" id="IPR004154">
    <property type="entry name" value="Anticodon-bd"/>
</dbReference>
<dbReference type="InterPro" id="IPR036621">
    <property type="entry name" value="Anticodon-bd_dom_sf"/>
</dbReference>
<dbReference type="InterPro" id="IPR015807">
    <property type="entry name" value="His-tRNA-ligase"/>
</dbReference>
<dbReference type="InterPro" id="IPR041715">
    <property type="entry name" value="HisRS-like_core"/>
</dbReference>
<dbReference type="InterPro" id="IPR004516">
    <property type="entry name" value="HisRS/HisZ"/>
</dbReference>
<dbReference type="InterPro" id="IPR033656">
    <property type="entry name" value="HisRS_anticodon"/>
</dbReference>
<dbReference type="NCBIfam" id="TIGR00442">
    <property type="entry name" value="hisS"/>
    <property type="match status" value="1"/>
</dbReference>
<dbReference type="PANTHER" id="PTHR43707:SF1">
    <property type="entry name" value="HISTIDINE--TRNA LIGASE, MITOCHONDRIAL-RELATED"/>
    <property type="match status" value="1"/>
</dbReference>
<dbReference type="PANTHER" id="PTHR43707">
    <property type="entry name" value="HISTIDYL-TRNA SYNTHETASE"/>
    <property type="match status" value="1"/>
</dbReference>
<dbReference type="Pfam" id="PF03129">
    <property type="entry name" value="HGTP_anticodon"/>
    <property type="match status" value="1"/>
</dbReference>
<dbReference type="Pfam" id="PF13393">
    <property type="entry name" value="tRNA-synt_His"/>
    <property type="match status" value="1"/>
</dbReference>
<dbReference type="PIRSF" id="PIRSF001549">
    <property type="entry name" value="His-tRNA_synth"/>
    <property type="match status" value="1"/>
</dbReference>
<dbReference type="SUPFAM" id="SSF52954">
    <property type="entry name" value="Class II aaRS ABD-related"/>
    <property type="match status" value="1"/>
</dbReference>
<dbReference type="SUPFAM" id="SSF55681">
    <property type="entry name" value="Class II aaRS and biotin synthetases"/>
    <property type="match status" value="1"/>
</dbReference>
<dbReference type="PROSITE" id="PS50862">
    <property type="entry name" value="AA_TRNA_LIGASE_II"/>
    <property type="match status" value="1"/>
</dbReference>
<accession>Q82XU9</accession>
<gene>
    <name evidence="1" type="primary">hisS</name>
    <name type="ordered locus">NE0150</name>
</gene>
<name>SYH_NITEU</name>